<accession>Q1AWI8</accession>
<protein>
    <recommendedName>
        <fullName evidence="1">Succinate--CoA ligase [ADP-forming] subunit beta</fullName>
        <ecNumber evidence="1">6.2.1.5</ecNumber>
    </recommendedName>
    <alternativeName>
        <fullName evidence="1">Succinyl-CoA synthetase subunit beta</fullName>
        <shortName evidence="1">SCS-beta</shortName>
    </alternativeName>
</protein>
<organism>
    <name type="scientific">Rubrobacter xylanophilus (strain DSM 9941 / JCM 11954 / NBRC 16129 / PRD-1)</name>
    <dbReference type="NCBI Taxonomy" id="266117"/>
    <lineage>
        <taxon>Bacteria</taxon>
        <taxon>Bacillati</taxon>
        <taxon>Actinomycetota</taxon>
        <taxon>Rubrobacteria</taxon>
        <taxon>Rubrobacterales</taxon>
        <taxon>Rubrobacteraceae</taxon>
        <taxon>Rubrobacter</taxon>
    </lineage>
</organism>
<evidence type="ECO:0000255" key="1">
    <source>
        <dbReference type="HAMAP-Rule" id="MF_00558"/>
    </source>
</evidence>
<comment type="function">
    <text evidence="1">Succinyl-CoA synthetase functions in the citric acid cycle (TCA), coupling the hydrolysis of succinyl-CoA to the synthesis of either ATP or GTP and thus represents the only step of substrate-level phosphorylation in the TCA. The beta subunit provides nucleotide specificity of the enzyme and binds the substrate succinate, while the binding sites for coenzyme A and phosphate are found in the alpha subunit.</text>
</comment>
<comment type="catalytic activity">
    <reaction evidence="1">
        <text>succinate + ATP + CoA = succinyl-CoA + ADP + phosphate</text>
        <dbReference type="Rhea" id="RHEA:17661"/>
        <dbReference type="ChEBI" id="CHEBI:30031"/>
        <dbReference type="ChEBI" id="CHEBI:30616"/>
        <dbReference type="ChEBI" id="CHEBI:43474"/>
        <dbReference type="ChEBI" id="CHEBI:57287"/>
        <dbReference type="ChEBI" id="CHEBI:57292"/>
        <dbReference type="ChEBI" id="CHEBI:456216"/>
        <dbReference type="EC" id="6.2.1.5"/>
    </reaction>
    <physiologicalReaction direction="right-to-left" evidence="1">
        <dbReference type="Rhea" id="RHEA:17663"/>
    </physiologicalReaction>
</comment>
<comment type="catalytic activity">
    <reaction evidence="1">
        <text>GTP + succinate + CoA = succinyl-CoA + GDP + phosphate</text>
        <dbReference type="Rhea" id="RHEA:22120"/>
        <dbReference type="ChEBI" id="CHEBI:30031"/>
        <dbReference type="ChEBI" id="CHEBI:37565"/>
        <dbReference type="ChEBI" id="CHEBI:43474"/>
        <dbReference type="ChEBI" id="CHEBI:57287"/>
        <dbReference type="ChEBI" id="CHEBI:57292"/>
        <dbReference type="ChEBI" id="CHEBI:58189"/>
    </reaction>
    <physiologicalReaction direction="right-to-left" evidence="1">
        <dbReference type="Rhea" id="RHEA:22122"/>
    </physiologicalReaction>
</comment>
<comment type="cofactor">
    <cofactor evidence="1">
        <name>Mg(2+)</name>
        <dbReference type="ChEBI" id="CHEBI:18420"/>
    </cofactor>
    <text evidence="1">Binds 1 Mg(2+) ion per subunit.</text>
</comment>
<comment type="pathway">
    <text evidence="1">Carbohydrate metabolism; tricarboxylic acid cycle; succinate from succinyl-CoA (ligase route): step 1/1.</text>
</comment>
<comment type="subunit">
    <text evidence="1">Heterotetramer of two alpha and two beta subunits.</text>
</comment>
<comment type="similarity">
    <text evidence="1">Belongs to the succinate/malate CoA ligase beta subunit family.</text>
</comment>
<dbReference type="EC" id="6.2.1.5" evidence="1"/>
<dbReference type="EMBL" id="CP000386">
    <property type="protein sequence ID" value="ABG04240.1"/>
    <property type="molecule type" value="Genomic_DNA"/>
</dbReference>
<dbReference type="RefSeq" id="WP_011564257.1">
    <property type="nucleotide sequence ID" value="NC_008148.1"/>
</dbReference>
<dbReference type="SMR" id="Q1AWI8"/>
<dbReference type="STRING" id="266117.Rxyl_1276"/>
<dbReference type="KEGG" id="rxy:Rxyl_1276"/>
<dbReference type="eggNOG" id="COG0045">
    <property type="taxonomic scope" value="Bacteria"/>
</dbReference>
<dbReference type="HOGENOM" id="CLU_037430_0_2_11"/>
<dbReference type="OrthoDB" id="9802602at2"/>
<dbReference type="PhylomeDB" id="Q1AWI8"/>
<dbReference type="UniPathway" id="UPA00223">
    <property type="reaction ID" value="UER00999"/>
</dbReference>
<dbReference type="Proteomes" id="UP000006637">
    <property type="component" value="Chromosome"/>
</dbReference>
<dbReference type="GO" id="GO:0005829">
    <property type="term" value="C:cytosol"/>
    <property type="evidence" value="ECO:0007669"/>
    <property type="project" value="TreeGrafter"/>
</dbReference>
<dbReference type="GO" id="GO:0042709">
    <property type="term" value="C:succinate-CoA ligase complex"/>
    <property type="evidence" value="ECO:0007669"/>
    <property type="project" value="TreeGrafter"/>
</dbReference>
<dbReference type="GO" id="GO:0005524">
    <property type="term" value="F:ATP binding"/>
    <property type="evidence" value="ECO:0007669"/>
    <property type="project" value="UniProtKB-UniRule"/>
</dbReference>
<dbReference type="GO" id="GO:0000287">
    <property type="term" value="F:magnesium ion binding"/>
    <property type="evidence" value="ECO:0007669"/>
    <property type="project" value="UniProtKB-UniRule"/>
</dbReference>
<dbReference type="GO" id="GO:0004775">
    <property type="term" value="F:succinate-CoA ligase (ADP-forming) activity"/>
    <property type="evidence" value="ECO:0007669"/>
    <property type="project" value="UniProtKB-UniRule"/>
</dbReference>
<dbReference type="GO" id="GO:0004776">
    <property type="term" value="F:succinate-CoA ligase (GDP-forming) activity"/>
    <property type="evidence" value="ECO:0007669"/>
    <property type="project" value="RHEA"/>
</dbReference>
<dbReference type="GO" id="GO:0006104">
    <property type="term" value="P:succinyl-CoA metabolic process"/>
    <property type="evidence" value="ECO:0007669"/>
    <property type="project" value="TreeGrafter"/>
</dbReference>
<dbReference type="GO" id="GO:0006099">
    <property type="term" value="P:tricarboxylic acid cycle"/>
    <property type="evidence" value="ECO:0007669"/>
    <property type="project" value="UniProtKB-UniRule"/>
</dbReference>
<dbReference type="FunFam" id="3.30.1490.20:FF:000014">
    <property type="entry name" value="Succinate--CoA ligase [ADP-forming] subunit beta"/>
    <property type="match status" value="1"/>
</dbReference>
<dbReference type="FunFam" id="3.30.470.20:FF:000002">
    <property type="entry name" value="Succinate--CoA ligase [ADP-forming] subunit beta"/>
    <property type="match status" value="1"/>
</dbReference>
<dbReference type="FunFam" id="3.40.50.261:FF:000007">
    <property type="entry name" value="Succinate--CoA ligase [ADP-forming] subunit beta"/>
    <property type="match status" value="1"/>
</dbReference>
<dbReference type="Gene3D" id="3.30.1490.20">
    <property type="entry name" value="ATP-grasp fold, A domain"/>
    <property type="match status" value="1"/>
</dbReference>
<dbReference type="Gene3D" id="3.30.470.20">
    <property type="entry name" value="ATP-grasp fold, B domain"/>
    <property type="match status" value="1"/>
</dbReference>
<dbReference type="Gene3D" id="3.40.50.261">
    <property type="entry name" value="Succinyl-CoA synthetase domains"/>
    <property type="match status" value="1"/>
</dbReference>
<dbReference type="HAMAP" id="MF_00558">
    <property type="entry name" value="Succ_CoA_beta"/>
    <property type="match status" value="1"/>
</dbReference>
<dbReference type="InterPro" id="IPR011761">
    <property type="entry name" value="ATP-grasp"/>
</dbReference>
<dbReference type="InterPro" id="IPR013650">
    <property type="entry name" value="ATP-grasp_succ-CoA_synth-type"/>
</dbReference>
<dbReference type="InterPro" id="IPR013815">
    <property type="entry name" value="ATP_grasp_subdomain_1"/>
</dbReference>
<dbReference type="InterPro" id="IPR017866">
    <property type="entry name" value="Succ-CoA_synthase_bsu_CS"/>
</dbReference>
<dbReference type="InterPro" id="IPR005811">
    <property type="entry name" value="SUCC_ACL_C"/>
</dbReference>
<dbReference type="InterPro" id="IPR005809">
    <property type="entry name" value="Succ_CoA_ligase-like_bsu"/>
</dbReference>
<dbReference type="InterPro" id="IPR016102">
    <property type="entry name" value="Succinyl-CoA_synth-like"/>
</dbReference>
<dbReference type="NCBIfam" id="NF001913">
    <property type="entry name" value="PRK00696.1"/>
    <property type="match status" value="1"/>
</dbReference>
<dbReference type="NCBIfam" id="TIGR01016">
    <property type="entry name" value="sucCoAbeta"/>
    <property type="match status" value="1"/>
</dbReference>
<dbReference type="PANTHER" id="PTHR11815:SF10">
    <property type="entry name" value="SUCCINATE--COA LIGASE [GDP-FORMING] SUBUNIT BETA, MITOCHONDRIAL"/>
    <property type="match status" value="1"/>
</dbReference>
<dbReference type="PANTHER" id="PTHR11815">
    <property type="entry name" value="SUCCINYL-COA SYNTHETASE BETA CHAIN"/>
    <property type="match status" value="1"/>
</dbReference>
<dbReference type="Pfam" id="PF08442">
    <property type="entry name" value="ATP-grasp_2"/>
    <property type="match status" value="1"/>
</dbReference>
<dbReference type="Pfam" id="PF00549">
    <property type="entry name" value="Ligase_CoA"/>
    <property type="match status" value="1"/>
</dbReference>
<dbReference type="PIRSF" id="PIRSF001554">
    <property type="entry name" value="SucCS_beta"/>
    <property type="match status" value="1"/>
</dbReference>
<dbReference type="SUPFAM" id="SSF56059">
    <property type="entry name" value="Glutathione synthetase ATP-binding domain-like"/>
    <property type="match status" value="1"/>
</dbReference>
<dbReference type="SUPFAM" id="SSF52210">
    <property type="entry name" value="Succinyl-CoA synthetase domains"/>
    <property type="match status" value="1"/>
</dbReference>
<dbReference type="PROSITE" id="PS50975">
    <property type="entry name" value="ATP_GRASP"/>
    <property type="match status" value="1"/>
</dbReference>
<dbReference type="PROSITE" id="PS01217">
    <property type="entry name" value="SUCCINYL_COA_LIG_3"/>
    <property type="match status" value="1"/>
</dbReference>
<name>SUCC_RUBXD</name>
<keyword id="KW-0067">ATP-binding</keyword>
<keyword id="KW-0436">Ligase</keyword>
<keyword id="KW-0460">Magnesium</keyword>
<keyword id="KW-0479">Metal-binding</keyword>
<keyword id="KW-0547">Nucleotide-binding</keyword>
<keyword id="KW-1185">Reference proteome</keyword>
<keyword id="KW-0816">Tricarboxylic acid cycle</keyword>
<proteinExistence type="inferred from homology"/>
<gene>
    <name evidence="1" type="primary">sucC</name>
    <name type="ordered locus">Rxyl_1276</name>
</gene>
<sequence length="383" mass="40869">MDLYEHQGKELLGRFGLRTLPGVVATTPEEARRAAERLGGTVAVKAQVLTGGRGKAGGIKVAESPEEAEEAARRILGMDIRGHTVRRLLIESGADIERELYLSAMVDRESRRPLILFSTEGGVDIEEVAERSPGSIVRLHVDPLVGLLPYQVRELTFASGLSGETAKDFGRAVQNLYEAFRGIDASLVEINPLVVTGEGEVVALDAKVTVDNSSLYRHQEIAGWRDVEAADPQEHRAQEVGLQYVKLDGDVGILGNGAGLVMSTLDVVAQAGGRPANFCDVGGGADAEKIATALEIVASNENVRSVFFNIFGGITRGDEVARGLLAAIRKTGIDLPVVVRLDGTNAEEGLRLLAEGAPENVHTEETMLDAARRAVELARDGGH</sequence>
<reference key="1">
    <citation type="submission" date="2006-06" db="EMBL/GenBank/DDBJ databases">
        <title>Complete sequence of Rubrobacter xylanophilus DSM 9941.</title>
        <authorList>
            <consortium name="US DOE Joint Genome Institute"/>
            <person name="Copeland A."/>
            <person name="Lucas S."/>
            <person name="Lapidus A."/>
            <person name="Barry K."/>
            <person name="Detter J.C."/>
            <person name="Glavina del Rio T."/>
            <person name="Hammon N."/>
            <person name="Israni S."/>
            <person name="Dalin E."/>
            <person name="Tice H."/>
            <person name="Pitluck S."/>
            <person name="Munk A.C."/>
            <person name="Brettin T."/>
            <person name="Bruce D."/>
            <person name="Han C."/>
            <person name="Tapia R."/>
            <person name="Gilna P."/>
            <person name="Schmutz J."/>
            <person name="Larimer F."/>
            <person name="Land M."/>
            <person name="Hauser L."/>
            <person name="Kyrpides N."/>
            <person name="Lykidis A."/>
            <person name="da Costa M.S."/>
            <person name="Rainey F.A."/>
            <person name="Empadinhas N."/>
            <person name="Jolivet E."/>
            <person name="Battista J.R."/>
            <person name="Richardson P."/>
        </authorList>
    </citation>
    <scope>NUCLEOTIDE SEQUENCE [LARGE SCALE GENOMIC DNA]</scope>
    <source>
        <strain>DSM 9941 / JCM 11954 / NBRC 16129 / PRD-1</strain>
    </source>
</reference>
<feature type="chain" id="PRO_1000082207" description="Succinate--CoA ligase [ADP-forming] subunit beta">
    <location>
        <begin position="1"/>
        <end position="383"/>
    </location>
</feature>
<feature type="domain" description="ATP-grasp" evidence="1">
    <location>
        <begin position="9"/>
        <end position="236"/>
    </location>
</feature>
<feature type="binding site" evidence="1">
    <location>
        <position position="45"/>
    </location>
    <ligand>
        <name>ATP</name>
        <dbReference type="ChEBI" id="CHEBI:30616"/>
    </ligand>
</feature>
<feature type="binding site" evidence="1">
    <location>
        <begin position="52"/>
        <end position="54"/>
    </location>
    <ligand>
        <name>ATP</name>
        <dbReference type="ChEBI" id="CHEBI:30616"/>
    </ligand>
</feature>
<feature type="binding site" evidence="1">
    <location>
        <position position="91"/>
    </location>
    <ligand>
        <name>ATP</name>
        <dbReference type="ChEBI" id="CHEBI:30616"/>
    </ligand>
</feature>
<feature type="binding site" evidence="1">
    <location>
        <position position="94"/>
    </location>
    <ligand>
        <name>ATP</name>
        <dbReference type="ChEBI" id="CHEBI:30616"/>
    </ligand>
</feature>
<feature type="binding site" evidence="1">
    <location>
        <position position="99"/>
    </location>
    <ligand>
        <name>ATP</name>
        <dbReference type="ChEBI" id="CHEBI:30616"/>
    </ligand>
</feature>
<feature type="binding site" evidence="1">
    <location>
        <position position="191"/>
    </location>
    <ligand>
        <name>Mg(2+)</name>
        <dbReference type="ChEBI" id="CHEBI:18420"/>
    </ligand>
</feature>
<feature type="binding site" evidence="1">
    <location>
        <position position="205"/>
    </location>
    <ligand>
        <name>Mg(2+)</name>
        <dbReference type="ChEBI" id="CHEBI:18420"/>
    </ligand>
</feature>
<feature type="binding site" evidence="1">
    <location>
        <position position="256"/>
    </location>
    <ligand>
        <name>substrate</name>
        <note>ligand shared with subunit alpha</note>
    </ligand>
</feature>
<feature type="binding site" evidence="1">
    <location>
        <begin position="313"/>
        <end position="315"/>
    </location>
    <ligand>
        <name>substrate</name>
        <note>ligand shared with subunit alpha</note>
    </ligand>
</feature>